<reference key="1">
    <citation type="submission" date="2007-10" db="EMBL/GenBank/DDBJ databases">
        <title>Brucella canis ATCC 23365 whole genome shotgun sequencing project.</title>
        <authorList>
            <person name="Setubal J.C."/>
            <person name="Bowns C."/>
            <person name="Boyle S."/>
            <person name="Crasta O.R."/>
            <person name="Czar M.J."/>
            <person name="Dharmanolla C."/>
            <person name="Gillespie J.J."/>
            <person name="Kenyon R.W."/>
            <person name="Lu J."/>
            <person name="Mane S."/>
            <person name="Mohapatra S."/>
            <person name="Nagrani S."/>
            <person name="Purkayastha A."/>
            <person name="Rajasimha H.K."/>
            <person name="Shallom J.M."/>
            <person name="Shallom S."/>
            <person name="Shukla M."/>
            <person name="Snyder E.E."/>
            <person name="Sobral B.W."/>
            <person name="Wattam A.R."/>
            <person name="Will R."/>
            <person name="Williams K."/>
            <person name="Yoo H."/>
            <person name="Bruce D."/>
            <person name="Detter C."/>
            <person name="Munk C."/>
            <person name="Brettin T.S."/>
        </authorList>
    </citation>
    <scope>NUCLEOTIDE SEQUENCE [LARGE SCALE GENOMIC DNA]</scope>
    <source>
        <strain>ATCC 23365 / NCTC 10854 / RM-666</strain>
    </source>
</reference>
<comment type="function">
    <text evidence="1">One of several proteins that assist in the late maturation steps of the functional core of the 30S ribosomal subunit. Associates with free 30S ribosomal subunits (but not with 30S subunits that are part of 70S ribosomes or polysomes). Required for efficient processing of 16S rRNA. May interact with the 5'-terminal helix region of 16S rRNA.</text>
</comment>
<comment type="subunit">
    <text evidence="1">Monomer. Binds 30S ribosomal subunits, but not 50S ribosomal subunits or 70S ribosomes.</text>
</comment>
<comment type="subcellular location">
    <subcellularLocation>
        <location evidence="1">Cytoplasm</location>
    </subcellularLocation>
</comment>
<comment type="similarity">
    <text evidence="1">Belongs to the RbfA family.</text>
</comment>
<keyword id="KW-0963">Cytoplasm</keyword>
<keyword id="KW-1185">Reference proteome</keyword>
<keyword id="KW-0690">Ribosome biogenesis</keyword>
<protein>
    <recommendedName>
        <fullName evidence="1">Ribosome-binding factor A</fullName>
    </recommendedName>
</protein>
<name>RBFA_BRUC2</name>
<organism>
    <name type="scientific">Brucella canis (strain ATCC 23365 / NCTC 10854 / RM-666)</name>
    <dbReference type="NCBI Taxonomy" id="483179"/>
    <lineage>
        <taxon>Bacteria</taxon>
        <taxon>Pseudomonadati</taxon>
        <taxon>Pseudomonadota</taxon>
        <taxon>Alphaproteobacteria</taxon>
        <taxon>Hyphomicrobiales</taxon>
        <taxon>Brucellaceae</taxon>
        <taxon>Brucella/Ochrobactrum group</taxon>
        <taxon>Brucella</taxon>
    </lineage>
</organism>
<evidence type="ECO:0000255" key="1">
    <source>
        <dbReference type="HAMAP-Rule" id="MF_00003"/>
    </source>
</evidence>
<evidence type="ECO:0000256" key="2">
    <source>
        <dbReference type="SAM" id="MobiDB-lite"/>
    </source>
</evidence>
<gene>
    <name evidence="1" type="primary">rbfA</name>
    <name type="ordered locus">BCAN_A2208</name>
</gene>
<dbReference type="EMBL" id="CP000872">
    <property type="protein sequence ID" value="ABX63190.1"/>
    <property type="molecule type" value="Genomic_DNA"/>
</dbReference>
<dbReference type="RefSeq" id="WP_002965228.1">
    <property type="nucleotide sequence ID" value="NC_010103.1"/>
</dbReference>
<dbReference type="SMR" id="A9M9Z5"/>
<dbReference type="GeneID" id="97534581"/>
<dbReference type="KEGG" id="bcs:BCAN_A2208"/>
<dbReference type="HOGENOM" id="CLU_089475_1_0_5"/>
<dbReference type="Proteomes" id="UP000001385">
    <property type="component" value="Chromosome I"/>
</dbReference>
<dbReference type="GO" id="GO:0005829">
    <property type="term" value="C:cytosol"/>
    <property type="evidence" value="ECO:0007669"/>
    <property type="project" value="TreeGrafter"/>
</dbReference>
<dbReference type="GO" id="GO:0043024">
    <property type="term" value="F:ribosomal small subunit binding"/>
    <property type="evidence" value="ECO:0007669"/>
    <property type="project" value="TreeGrafter"/>
</dbReference>
<dbReference type="GO" id="GO:0030490">
    <property type="term" value="P:maturation of SSU-rRNA"/>
    <property type="evidence" value="ECO:0007669"/>
    <property type="project" value="UniProtKB-UniRule"/>
</dbReference>
<dbReference type="Gene3D" id="3.30.300.20">
    <property type="match status" value="1"/>
</dbReference>
<dbReference type="HAMAP" id="MF_00003">
    <property type="entry name" value="RbfA"/>
    <property type="match status" value="1"/>
</dbReference>
<dbReference type="InterPro" id="IPR015946">
    <property type="entry name" value="KH_dom-like_a/b"/>
</dbReference>
<dbReference type="InterPro" id="IPR000238">
    <property type="entry name" value="RbfA"/>
</dbReference>
<dbReference type="InterPro" id="IPR023799">
    <property type="entry name" value="RbfA_dom_sf"/>
</dbReference>
<dbReference type="InterPro" id="IPR020053">
    <property type="entry name" value="Ribosome-bd_factorA_CS"/>
</dbReference>
<dbReference type="NCBIfam" id="NF001802">
    <property type="entry name" value="PRK00521.2-5"/>
    <property type="match status" value="1"/>
</dbReference>
<dbReference type="NCBIfam" id="TIGR00082">
    <property type="entry name" value="rbfA"/>
    <property type="match status" value="1"/>
</dbReference>
<dbReference type="PANTHER" id="PTHR33515">
    <property type="entry name" value="RIBOSOME-BINDING FACTOR A, CHLOROPLASTIC-RELATED"/>
    <property type="match status" value="1"/>
</dbReference>
<dbReference type="PANTHER" id="PTHR33515:SF1">
    <property type="entry name" value="RIBOSOME-BINDING FACTOR A, CHLOROPLASTIC-RELATED"/>
    <property type="match status" value="1"/>
</dbReference>
<dbReference type="Pfam" id="PF02033">
    <property type="entry name" value="RBFA"/>
    <property type="match status" value="1"/>
</dbReference>
<dbReference type="SUPFAM" id="SSF89919">
    <property type="entry name" value="Ribosome-binding factor A, RbfA"/>
    <property type="match status" value="1"/>
</dbReference>
<dbReference type="PROSITE" id="PS01319">
    <property type="entry name" value="RBFA"/>
    <property type="match status" value="1"/>
</dbReference>
<sequence>MARSHDTKGSGGLSQRQLRVGEQVRHALAQVLQRGEIRDDLIERTVISVSEVRMSPDLKIATCFITPLGSADPQAVIKALASHAKFIRGRVAPSLAQMKYMPEFRFRPDTSFDNFSKIDALLRSPEVARDLSHDDDEDGGADEAPRNGDE</sequence>
<proteinExistence type="inferred from homology"/>
<feature type="chain" id="PRO_1000073751" description="Ribosome-binding factor A">
    <location>
        <begin position="1"/>
        <end position="150"/>
    </location>
</feature>
<feature type="region of interest" description="Disordered" evidence="2">
    <location>
        <begin position="126"/>
        <end position="150"/>
    </location>
</feature>
<accession>A9M9Z5</accession>